<keyword id="KW-0878">Amphibian defense peptide</keyword>
<keyword id="KW-0044">Antibiotic</keyword>
<keyword id="KW-0929">Antimicrobial</keyword>
<keyword id="KW-0903">Direct protein sequencing</keyword>
<keyword id="KW-1015">Disulfide bond</keyword>
<keyword id="KW-0295">Fungicide</keyword>
<keyword id="KW-0964">Secreted</keyword>
<dbReference type="SMR" id="P82828"/>
<dbReference type="GO" id="GO:0005576">
    <property type="term" value="C:extracellular region"/>
    <property type="evidence" value="ECO:0007669"/>
    <property type="project" value="UniProtKB-SubCell"/>
</dbReference>
<dbReference type="GO" id="GO:0042742">
    <property type="term" value="P:defense response to bacterium"/>
    <property type="evidence" value="ECO:0007669"/>
    <property type="project" value="UniProtKB-KW"/>
</dbReference>
<dbReference type="GO" id="GO:0050832">
    <property type="term" value="P:defense response to fungus"/>
    <property type="evidence" value="ECO:0007669"/>
    <property type="project" value="UniProtKB-KW"/>
</dbReference>
<dbReference type="GO" id="GO:0031640">
    <property type="term" value="P:killing of cells of another organism"/>
    <property type="evidence" value="ECO:0007669"/>
    <property type="project" value="UniProtKB-KW"/>
</dbReference>
<dbReference type="InterPro" id="IPR012521">
    <property type="entry name" value="Antimicrobial_frog_2"/>
</dbReference>
<dbReference type="Pfam" id="PF08023">
    <property type="entry name" value="Antimicrobial_2"/>
    <property type="match status" value="1"/>
</dbReference>
<reference key="1">
    <citation type="journal article" date="2000" name="Eur. J. Biochem.">
        <title>Peptides with antimicrobial activity from four different families isolated from the skins of the North American frogs Rana luteiventris, Rana berlandieri and Rana pipiens.</title>
        <authorList>
            <person name="Goraya J."/>
            <person name="Wang Y."/>
            <person name="Li Z."/>
            <person name="O'Flaherty M."/>
            <person name="Knoop F.C."/>
            <person name="Platz J.E."/>
            <person name="Conlon J.M."/>
        </authorList>
    </citation>
    <scope>PROTEIN SEQUENCE</scope>
    <scope>FUNCTION</scope>
    <scope>MASS SPECTROMETRY</scope>
    <source>
        <tissue>Skin secretion</tissue>
    </source>
</reference>
<proteinExistence type="evidence at protein level"/>
<sequence length="32" mass="3291">GILDSFKGVAKGVAKDLAGKLLDKLKCKITGC</sequence>
<feature type="peptide" id="PRO_0000044659" description="Ranatuerin-2La">
    <location>
        <begin position="1"/>
        <end position="32"/>
    </location>
</feature>
<feature type="disulfide bond" evidence="1">
    <location>
        <begin position="27"/>
        <end position="32"/>
    </location>
</feature>
<protein>
    <recommendedName>
        <fullName>Ranatuerin-2La</fullName>
    </recommendedName>
</protein>
<comment type="function">
    <text evidence="2">Antibacterial activity against Gram-positive bacterium S.aureus and Gram-negative bacterium E.coli. Weak activity against C.albicans.</text>
</comment>
<comment type="subcellular location">
    <subcellularLocation>
        <location>Secreted</location>
    </subcellularLocation>
</comment>
<comment type="tissue specificity">
    <text>Expressed by the skin glands.</text>
</comment>
<comment type="mass spectrometry" mass="3288.8" method="Electrospray" evidence="2"/>
<comment type="similarity">
    <text evidence="3">Belongs to the frog skin active peptide (FSAP) family. Ranatuerin subfamily.</text>
</comment>
<accession>P82828</accession>
<organism>
    <name type="scientific">Rana luteiventris</name>
    <name type="common">Columbia spotted frog</name>
    <name type="synonym">Rana pretiosa luteiventris</name>
    <dbReference type="NCBI Taxonomy" id="58176"/>
    <lineage>
        <taxon>Eukaryota</taxon>
        <taxon>Metazoa</taxon>
        <taxon>Chordata</taxon>
        <taxon>Craniata</taxon>
        <taxon>Vertebrata</taxon>
        <taxon>Euteleostomi</taxon>
        <taxon>Amphibia</taxon>
        <taxon>Batrachia</taxon>
        <taxon>Anura</taxon>
        <taxon>Neobatrachia</taxon>
        <taxon>Ranoidea</taxon>
        <taxon>Ranidae</taxon>
        <taxon>Rana</taxon>
        <taxon>Rana</taxon>
    </lineage>
</organism>
<name>RN2A_RANLU</name>
<evidence type="ECO:0000250" key="1"/>
<evidence type="ECO:0000269" key="2">
    <source>
    </source>
</evidence>
<evidence type="ECO:0000305" key="3"/>